<proteinExistence type="evidence at protein level"/>
<sequence length="2754" mass="302517">MAASERLYELWLLYYAQKDLGYLQQWLKAFVGAFKKSISLSSLEPRRPEEAGAEVPLLPLDELHVLAEQLHQADLEQALLLLKLFIILCRNLENIEAGRGQVLVPRVLALLTKLVAELKGCPPPQGRGTQLENVALHALLLCEGLFDPYQTWRRQRSGEVISSKEKSKYKFPPAALPQEFSAFFQESLQNADHLPPILLLRLIHLFCAVLAGGKENGQMAVSDGSVKGLLSVVRGWSRGPAPDPCLVPLALEALVGAVHVLHASRAPPRGPELRALLESYFHVLNADWPAGLSSGPEEALVTLRVSMLDAIPMMLACEDRPVLQATFLSNNCFEHLTRLIQNSKLYLQSRAPPEGDSDLATRLLTEPDVQKVLDQDTDAIAVHVVRVLTCIMSDSPSAKEVFKERIGYPHLQEVLQSHGPPTHRLLQELLNMAVEGDHSMCPPPPIRNEQPVLVLAQWLPSLPTAELRLFLAQRLRWLCDSCPASRATCVQAGLVGCLLETLSTGLALEARCQEQLLALLQALGRVSIRPMELRHLLRPRPGLDSEPGGAEAGKARHAGAVIRTLSGMARHQGPARALRYFDLTPSMAGIMVPPVQRWPGPGFTFHAWLCLHPMDTAPTPAPTRPLQRKQLYSFFTSSGSGFEAFFTAAGTLVVAVCTRKEYLTMSLPEVSFADSAWHCVAIVHVPGRRPFSQNLVHVYKDGHLVKTAPLRCPSLSEPFSSCCIGSAGYRTTTTTTGLPTPPVPATLAYTHPALTRSQSVPASTGLGWGSGLVAPLQEGSIDSTLAGTQDTRWGSPTSLEGELGAVAIFHEALQATALRTLCTLGPNETAPFKPEGELHELSTRLLLHYSPQACKNNICLDLSPSHGLDGRLTGHRVETWDVKDVVNCVGGMGALLPLLERVAAQPKEAEAGPAETHDLVGPELTSGHNTQGLVLPLGKSSEERMERNAVAAFLLMLRNFLQGHMVNQESLVQCQGPAIIGALLRKVPSWAMDMNVLMSAQLLMEQVAAEGSGPLLYLLYQHLLFNFHLWTLSDFAVRLGHIQYMSSIVREHRQKLRKKYGVQFILDALRTHYSPQRERPLAADDLRTVQTSLLGLAREFLVRSLSADDVQVTQTMLSFLAATGDDGQAVGALDLLLALLHGSLVQESLAVFLLEPGNLEVLLALLVRPGSLPLLPDRVCKILRRLQQNERLPERSRQRLRLRECGLQGLVACLPEGTVSPQLCQGLYKLFLGADCLNLSDLLAVVQLSLQADLSVRLDICRQLFHLIYGQPDVVRLLARQAGWQDVLTRLYVLEAATAGSPPPSSPESPTSPKPAPPKPPTESPAEPSDVFLPSEAPCPDPDGFYHALSPFCTPFDLGLERSSVGSGNTAGGGGSSGTLTPASQPGTPSPLDGPRPFPAAPGRHSSSLSNVLEDGSLPEPTISGDDTSNTSNPQQTSEEELCNLLTNVLFSVTWRGVEGSDEAAWRERGQVFSVLTQLGASATLVRPPDCIKRSLLEMMLESALTDIKEAPVGVLASLTQQALWLLRLLQDFLCAEGHGNQELWSEKLFEGVCSLLDRLGAWPHLANGTADLREMAQIGLRLVLGYILLEDPQLHAQAYVRLHMLLQTAVPARREEACYVLSKLEAALGRVLNTSSLESATDEAGSPLAAAAAAAAAERCSWLVPLVRTLLDRAYEPLGLQWGLPSLPPTNGSPTFFEDFQAFCATPEWRHFIDKQVQPTMSQFEMDTYAKSHDLMSGFWNACYDMLMSSGQRRQWERAQSRRAFQELVLEPAQRRARLEGLRYTAVLKQQATQHSMALLHWGALWRQLASPCGAWALRDTPIPRWKLSSAETYSRMRLKLVPNHHFDPHLEASALRDNLGEVPLTPTEEASLPLAVTKEAKVSTPPELLQEDQLGEDELAELETPMEAAELDEQREKLVLSAECQLVTVVAVVPGLLEVTTQNVYFYDGSTERVETEEGIGYDFRRPLAQLREVHLRRFNLRRSALELFFIDQANYFLNFPCKVGTTPVSSPSQTPRPQPGPIPPHTQVRNQVYSWLLRLRPPSQGYLSSRSPQEMLRASGLTQKWVQREISNFEYLMQLNTIAGRTYNDLSQYPVFPWVLQDYVSPTLDLSNPAVFRDLSKPIGVVNPKHAQLVREKYESFEDPAGTIDKFHYGTHYSNAAGVMHYLIRVEPFTSLHVQLQSGRFDCSDRQFHSVAAAWQARLESPADVKELIPEFFYFPDFLENQNGFDLGCLQLTNEKVGDVVLPPWASSPEDFIQQHRQALESEYVSAHLHEWIDLIFGYKQRGPAAEEALNVFYYCTYEGAVDLDHVTDERERKALEGIISNFGQTPCQLLKEPHPTRLSAEEAAHRLARLDTNSPSIFQHLDELKAFFAEVVSDGVPLVLALVPHRQPHSFITQGSPDLLVTVSASGLLGTHSWLPYDRNISNYFSFSKDPTMGSHKTQRLLSGPWVPGSGVSGQALAVAPDGKLLFSGGHWDGSLRVTALPRGKLLSQLSCHLDVVTCLALDTCGIYLISGSRDTTCMVWRLLHQGGLSVGLAPKPVQVLYGHGAAVSCVAISTELDMAVSGSEDGTVIIHTVRRGQFVAALRPLGATFPGPIFHLALGSEGQIVVQSSAWERPGAQVTYSLHLYSVNGKLRASLPLAEQPTALTVTEDFVLLGTAQCALHILQLNTLLPAAPPLPMKVAIRSVAVTKERSHVLVGLEDGKLIVVVAGQPSEVRSSQFARKLWRSSRRISQVSSGETEYNPTEAR</sequence>
<comment type="function">
    <text evidence="4 5">Probably involved in thrombopoiesis. Plays a role in the development or secretion of alpha-granules, that contain several growth factors important for platelet biogenesis.</text>
</comment>
<comment type="interaction">
    <interactant intactId="EBI-2862306">
        <id>Q6ZNJ1</id>
    </interactant>
    <interactant intactId="EBI-2433703">
        <id>Q96N67</id>
        <label>DOCK7</label>
    </interactant>
    <organismsDiffer>false</organismsDiffer>
    <experiments>8</experiments>
</comment>
<comment type="interaction">
    <interactant intactId="EBI-2862306">
        <id>Q6ZNJ1</id>
    </interactant>
    <interactant intactId="EBI-357515">
        <id>O15027</id>
        <label>SEC16A</label>
    </interactant>
    <organismsDiffer>false</organismsDiffer>
    <experiments>6</experiments>
</comment>
<comment type="interaction">
    <interactant intactId="EBI-2862306">
        <id>Q6ZNJ1</id>
    </interactant>
    <interactant intactId="EBI-2107455">
        <id>Q08AM6</id>
        <label>VAC14</label>
    </interactant>
    <organismsDiffer>false</organismsDiffer>
    <experiments>8</experiments>
</comment>
<comment type="subcellular location">
    <subcellularLocation>
        <location evidence="5">Endoplasmic reticulum</location>
    </subcellularLocation>
</comment>
<comment type="alternative products">
    <event type="alternative splicing"/>
    <isoform>
        <id>Q6ZNJ1-1</id>
        <name>1</name>
        <sequence type="displayed"/>
    </isoform>
    <isoform>
        <id>Q6ZNJ1-2</id>
        <name>2</name>
        <sequence type="described" ref="VSP_033505 VSP_033506"/>
    </isoform>
    <isoform>
        <id>Q6ZNJ1-3</id>
        <name>3</name>
        <sequence type="described" ref="VSP_033507"/>
    </isoform>
</comment>
<comment type="tissue specificity">
    <text evidence="4">Expressed in megakaryocytes.</text>
</comment>
<comment type="disease" evidence="4 5 6">
    <disease id="DI-03181">
        <name>Gray platelet syndrome</name>
        <acronym>GPS</acronym>
        <description>A rare platelet disorder characterized by a selective deficiency in the number and contents of platelet alpha-granules. It is associated with mild to moderate bleeding tendency and moderate thrombocytopenia. The platelets are enlarged and have a gray appearance on light microscopy of Wright-stained peripheral blood smears due to decreased granules.</description>
        <dbReference type="MIM" id="139090"/>
    </disease>
    <text>The disease is caused by variants affecting the gene represented in this entry.</text>
</comment>
<comment type="similarity">
    <text evidence="9">Belongs to the WD repeat neurobeachin family.</text>
</comment>
<comment type="sequence caution" evidence="9">
    <conflict type="miscellaneous discrepancy">
        <sequence resource="EMBL-CDS" id="BAC03994"/>
    </conflict>
    <text>Aberrant splicing.</text>
</comment>
<comment type="sequence caution" evidence="9">
    <conflict type="erroneous initiation">
        <sequence resource="EMBL-CDS" id="BAC85154"/>
    </conflict>
    <text>Extended N-terminus.</text>
</comment>
<reference key="1">
    <citation type="submission" date="2003-09" db="EMBL/GenBank/DDBJ databases">
        <title>The nucleotide sequence of a long cDNA clone isolated from human spleen.</title>
        <authorList>
            <person name="Jikuya H."/>
            <person name="Takano J."/>
            <person name="Kikuno R."/>
            <person name="Nagase T."/>
            <person name="Ohara O."/>
        </authorList>
    </citation>
    <scope>NUCLEOTIDE SEQUENCE [LARGE SCALE MRNA] (ISOFORM 1)</scope>
    <source>
        <tissue>Spleen</tissue>
    </source>
</reference>
<reference key="2">
    <citation type="journal article" date="2006" name="Nature">
        <title>The DNA sequence, annotation and analysis of human chromosome 3.</title>
        <authorList>
            <person name="Muzny D.M."/>
            <person name="Scherer S.E."/>
            <person name="Kaul R."/>
            <person name="Wang J."/>
            <person name="Yu J."/>
            <person name="Sudbrak R."/>
            <person name="Buhay C.J."/>
            <person name="Chen R."/>
            <person name="Cree A."/>
            <person name="Ding Y."/>
            <person name="Dugan-Rocha S."/>
            <person name="Gill R."/>
            <person name="Gunaratne P."/>
            <person name="Harris R.A."/>
            <person name="Hawes A.C."/>
            <person name="Hernandez J."/>
            <person name="Hodgson A.V."/>
            <person name="Hume J."/>
            <person name="Jackson A."/>
            <person name="Khan Z.M."/>
            <person name="Kovar-Smith C."/>
            <person name="Lewis L.R."/>
            <person name="Lozado R.J."/>
            <person name="Metzker M.L."/>
            <person name="Milosavljevic A."/>
            <person name="Miner G.R."/>
            <person name="Morgan M.B."/>
            <person name="Nazareth L.V."/>
            <person name="Scott G."/>
            <person name="Sodergren E."/>
            <person name="Song X.-Z."/>
            <person name="Steffen D."/>
            <person name="Wei S."/>
            <person name="Wheeler D.A."/>
            <person name="Wright M.W."/>
            <person name="Worley K.C."/>
            <person name="Yuan Y."/>
            <person name="Zhang Z."/>
            <person name="Adams C.Q."/>
            <person name="Ansari-Lari M.A."/>
            <person name="Ayele M."/>
            <person name="Brown M.J."/>
            <person name="Chen G."/>
            <person name="Chen Z."/>
            <person name="Clendenning J."/>
            <person name="Clerc-Blankenburg K.P."/>
            <person name="Chen R."/>
            <person name="Chen Z."/>
            <person name="Davis C."/>
            <person name="Delgado O."/>
            <person name="Dinh H.H."/>
            <person name="Dong W."/>
            <person name="Draper H."/>
            <person name="Ernst S."/>
            <person name="Fu G."/>
            <person name="Gonzalez-Garay M.L."/>
            <person name="Garcia D.K."/>
            <person name="Gillett W."/>
            <person name="Gu J."/>
            <person name="Hao B."/>
            <person name="Haugen E."/>
            <person name="Havlak P."/>
            <person name="He X."/>
            <person name="Hennig S."/>
            <person name="Hu S."/>
            <person name="Huang W."/>
            <person name="Jackson L.R."/>
            <person name="Jacob L.S."/>
            <person name="Kelly S.H."/>
            <person name="Kube M."/>
            <person name="Levy R."/>
            <person name="Li Z."/>
            <person name="Liu B."/>
            <person name="Liu J."/>
            <person name="Liu W."/>
            <person name="Lu J."/>
            <person name="Maheshwari M."/>
            <person name="Nguyen B.-V."/>
            <person name="Okwuonu G.O."/>
            <person name="Palmeiri A."/>
            <person name="Pasternak S."/>
            <person name="Perez L.M."/>
            <person name="Phelps K.A."/>
            <person name="Plopper F.J."/>
            <person name="Qiang B."/>
            <person name="Raymond C."/>
            <person name="Rodriguez R."/>
            <person name="Saenphimmachak C."/>
            <person name="Santibanez J."/>
            <person name="Shen H."/>
            <person name="Shen Y."/>
            <person name="Subramanian S."/>
            <person name="Tabor P.E."/>
            <person name="Verduzco D."/>
            <person name="Waldron L."/>
            <person name="Wang J."/>
            <person name="Wang J."/>
            <person name="Wang Q."/>
            <person name="Williams G.A."/>
            <person name="Wong G.K.-S."/>
            <person name="Yao Z."/>
            <person name="Zhang J."/>
            <person name="Zhang X."/>
            <person name="Zhao G."/>
            <person name="Zhou J."/>
            <person name="Zhou Y."/>
            <person name="Nelson D."/>
            <person name="Lehrach H."/>
            <person name="Reinhardt R."/>
            <person name="Naylor S.L."/>
            <person name="Yang H."/>
            <person name="Olson M."/>
            <person name="Weinstock G."/>
            <person name="Gibbs R.A."/>
        </authorList>
    </citation>
    <scope>NUCLEOTIDE SEQUENCE [LARGE SCALE GENOMIC DNA]</scope>
</reference>
<reference key="3">
    <citation type="journal article" date="2004" name="Nat. Genet.">
        <title>Complete sequencing and characterization of 21,243 full-length human cDNAs.</title>
        <authorList>
            <person name="Ota T."/>
            <person name="Suzuki Y."/>
            <person name="Nishikawa T."/>
            <person name="Otsuki T."/>
            <person name="Sugiyama T."/>
            <person name="Irie R."/>
            <person name="Wakamatsu A."/>
            <person name="Hayashi K."/>
            <person name="Sato H."/>
            <person name="Nagai K."/>
            <person name="Kimura K."/>
            <person name="Makita H."/>
            <person name="Sekine M."/>
            <person name="Obayashi M."/>
            <person name="Nishi T."/>
            <person name="Shibahara T."/>
            <person name="Tanaka T."/>
            <person name="Ishii S."/>
            <person name="Yamamoto J."/>
            <person name="Saito K."/>
            <person name="Kawai Y."/>
            <person name="Isono Y."/>
            <person name="Nakamura Y."/>
            <person name="Nagahari K."/>
            <person name="Murakami K."/>
            <person name="Yasuda T."/>
            <person name="Iwayanagi T."/>
            <person name="Wagatsuma M."/>
            <person name="Shiratori A."/>
            <person name="Sudo H."/>
            <person name="Hosoiri T."/>
            <person name="Kaku Y."/>
            <person name="Kodaira H."/>
            <person name="Kondo H."/>
            <person name="Sugawara M."/>
            <person name="Takahashi M."/>
            <person name="Kanda K."/>
            <person name="Yokoi T."/>
            <person name="Furuya T."/>
            <person name="Kikkawa E."/>
            <person name="Omura Y."/>
            <person name="Abe K."/>
            <person name="Kamihara K."/>
            <person name="Katsuta N."/>
            <person name="Sato K."/>
            <person name="Tanikawa M."/>
            <person name="Yamazaki M."/>
            <person name="Ninomiya K."/>
            <person name="Ishibashi T."/>
            <person name="Yamashita H."/>
            <person name="Murakawa K."/>
            <person name="Fujimori K."/>
            <person name="Tanai H."/>
            <person name="Kimata M."/>
            <person name="Watanabe M."/>
            <person name="Hiraoka S."/>
            <person name="Chiba Y."/>
            <person name="Ishida S."/>
            <person name="Ono Y."/>
            <person name="Takiguchi S."/>
            <person name="Watanabe S."/>
            <person name="Yosida M."/>
            <person name="Hotuta T."/>
            <person name="Kusano J."/>
            <person name="Kanehori K."/>
            <person name="Takahashi-Fujii A."/>
            <person name="Hara H."/>
            <person name="Tanase T.-O."/>
            <person name="Nomura Y."/>
            <person name="Togiya S."/>
            <person name="Komai F."/>
            <person name="Hara R."/>
            <person name="Takeuchi K."/>
            <person name="Arita M."/>
            <person name="Imose N."/>
            <person name="Musashino K."/>
            <person name="Yuuki H."/>
            <person name="Oshima A."/>
            <person name="Sasaki N."/>
            <person name="Aotsuka S."/>
            <person name="Yoshikawa Y."/>
            <person name="Matsunawa H."/>
            <person name="Ichihara T."/>
            <person name="Shiohata N."/>
            <person name="Sano S."/>
            <person name="Moriya S."/>
            <person name="Momiyama H."/>
            <person name="Satoh N."/>
            <person name="Takami S."/>
            <person name="Terashima Y."/>
            <person name="Suzuki O."/>
            <person name="Nakagawa S."/>
            <person name="Senoh A."/>
            <person name="Mizoguchi H."/>
            <person name="Goto Y."/>
            <person name="Shimizu F."/>
            <person name="Wakebe H."/>
            <person name="Hishigaki H."/>
            <person name="Watanabe T."/>
            <person name="Sugiyama A."/>
            <person name="Takemoto M."/>
            <person name="Kawakami B."/>
            <person name="Yamazaki M."/>
            <person name="Watanabe K."/>
            <person name="Kumagai A."/>
            <person name="Itakura S."/>
            <person name="Fukuzumi Y."/>
            <person name="Fujimori Y."/>
            <person name="Komiyama M."/>
            <person name="Tashiro H."/>
            <person name="Tanigami A."/>
            <person name="Fujiwara T."/>
            <person name="Ono T."/>
            <person name="Yamada K."/>
            <person name="Fujii Y."/>
            <person name="Ozaki K."/>
            <person name="Hirao M."/>
            <person name="Ohmori Y."/>
            <person name="Kawabata A."/>
            <person name="Hikiji T."/>
            <person name="Kobatake N."/>
            <person name="Inagaki H."/>
            <person name="Ikema Y."/>
            <person name="Okamoto S."/>
            <person name="Okitani R."/>
            <person name="Kawakami T."/>
            <person name="Noguchi S."/>
            <person name="Itoh T."/>
            <person name="Shigeta K."/>
            <person name="Senba T."/>
            <person name="Matsumura K."/>
            <person name="Nakajima Y."/>
            <person name="Mizuno T."/>
            <person name="Morinaga M."/>
            <person name="Sasaki M."/>
            <person name="Togashi T."/>
            <person name="Oyama M."/>
            <person name="Hata H."/>
            <person name="Watanabe M."/>
            <person name="Komatsu T."/>
            <person name="Mizushima-Sugano J."/>
            <person name="Satoh T."/>
            <person name="Shirai Y."/>
            <person name="Takahashi Y."/>
            <person name="Nakagawa K."/>
            <person name="Okumura K."/>
            <person name="Nagase T."/>
            <person name="Nomura N."/>
            <person name="Kikuchi H."/>
            <person name="Masuho Y."/>
            <person name="Yamashita R."/>
            <person name="Nakai K."/>
            <person name="Yada T."/>
            <person name="Nakamura Y."/>
            <person name="Ohara O."/>
            <person name="Isogai T."/>
            <person name="Sugano S."/>
        </authorList>
    </citation>
    <scope>PARTIAL NUCLEOTIDE SEQUENCE [LARGE SCALE MRNA]</scope>
    <source>
        <tissue>Spleen</tissue>
    </source>
</reference>
<reference key="4">
    <citation type="journal article" date="1998" name="DNA Res.">
        <title>Prediction of the coding sequences of unidentified human genes. IX. The complete sequences of 100 new cDNA clones from brain which can code for large proteins in vitro.</title>
        <authorList>
            <person name="Nagase T."/>
            <person name="Ishikawa K."/>
            <person name="Miyajima N."/>
            <person name="Tanaka A."/>
            <person name="Kotani H."/>
            <person name="Nomura N."/>
            <person name="Ohara O."/>
        </authorList>
    </citation>
    <scope>NUCLEOTIDE SEQUENCE [LARGE SCALE MRNA] OF 530-2754 (ISOFORM 2)</scope>
    <source>
        <tissue>Brain</tissue>
    </source>
</reference>
<reference key="5">
    <citation type="journal article" date="2002" name="DNA Res.">
        <title>Construction of expression-ready cDNA clones for KIAA genes: manual curation of 330 KIAA cDNA clones.</title>
        <authorList>
            <person name="Nakajima D."/>
            <person name="Okazaki N."/>
            <person name="Yamakawa H."/>
            <person name="Kikuno R."/>
            <person name="Ohara O."/>
            <person name="Nagase T."/>
        </authorList>
    </citation>
    <scope>SEQUENCE REVISION</scope>
</reference>
<reference key="6">
    <citation type="journal article" date="2003" name="Genome Res.">
        <title>The secreted protein discovery initiative (SPDI), a large-scale effort to identify novel human secreted and transmembrane proteins: a bioinformatics assessment.</title>
        <authorList>
            <person name="Clark H.F."/>
            <person name="Gurney A.L."/>
            <person name="Abaya E."/>
            <person name="Baker K."/>
            <person name="Baldwin D.T."/>
            <person name="Brush J."/>
            <person name="Chen J."/>
            <person name="Chow B."/>
            <person name="Chui C."/>
            <person name="Crowley C."/>
            <person name="Currell B."/>
            <person name="Deuel B."/>
            <person name="Dowd P."/>
            <person name="Eaton D."/>
            <person name="Foster J.S."/>
            <person name="Grimaldi C."/>
            <person name="Gu Q."/>
            <person name="Hass P.E."/>
            <person name="Heldens S."/>
            <person name="Huang A."/>
            <person name="Kim H.S."/>
            <person name="Klimowski L."/>
            <person name="Jin Y."/>
            <person name="Johnson S."/>
            <person name="Lee J."/>
            <person name="Lewis L."/>
            <person name="Liao D."/>
            <person name="Mark M.R."/>
            <person name="Robbie E."/>
            <person name="Sanchez C."/>
            <person name="Schoenfeld J."/>
            <person name="Seshagiri S."/>
            <person name="Simmons L."/>
            <person name="Singh J."/>
            <person name="Smith V."/>
            <person name="Stinson J."/>
            <person name="Vagts A."/>
            <person name="Vandlen R.L."/>
            <person name="Watanabe C."/>
            <person name="Wieand D."/>
            <person name="Woods K."/>
            <person name="Xie M.-H."/>
            <person name="Yansura D.G."/>
            <person name="Yi S."/>
            <person name="Yu G."/>
            <person name="Yuan J."/>
            <person name="Zhang M."/>
            <person name="Zhang Z."/>
            <person name="Goddard A.D."/>
            <person name="Wood W.I."/>
            <person name="Godowski P.J."/>
            <person name="Gray A.M."/>
        </authorList>
    </citation>
    <scope>NUCLEOTIDE SEQUENCE [LARGE SCALE MRNA] OF 1633-2754 (ISOFORM 3)</scope>
</reference>
<reference key="7">
    <citation type="journal article" date="2004" name="Genome Res.">
        <title>The status, quality, and expansion of the NIH full-length cDNA project: the Mammalian Gene Collection (MGC).</title>
        <authorList>
            <consortium name="The MGC Project Team"/>
        </authorList>
    </citation>
    <scope>NUCLEOTIDE SEQUENCE [LARGE SCALE MRNA] OF 1782-2754 (ISOFORM 1)</scope>
    <source>
        <tissue>Placenta</tissue>
    </source>
</reference>
<reference key="8">
    <citation type="journal article" date="2011" name="Nat. Genet.">
        <title>NBEAL2 is mutated in gray platelet syndrome and is required for biogenesis of platelet alpha-granules.</title>
        <authorList>
            <person name="Gunay-Aygun M."/>
            <person name="Falik-Zaccai T.C."/>
            <person name="Vilboux T."/>
            <person name="Zivony-Elboum Y."/>
            <person name="Gumruk F."/>
            <person name="Cetin M."/>
            <person name="Khayat M."/>
            <person name="Boerkoel C.F."/>
            <person name="Kfir N."/>
            <person name="Huang Y."/>
            <person name="Maynard D."/>
            <person name="Dorward H."/>
            <person name="Berger K."/>
            <person name="Kleta R."/>
            <person name="Anikster Y."/>
            <person name="Arat M."/>
            <person name="Freiberg A.S."/>
            <person name="Kehrel B.E."/>
            <person name="Jurk K."/>
            <person name="Cruz P."/>
            <person name="Mullikin J.C."/>
            <person name="White J.G."/>
            <person name="Huizing M."/>
            <person name="Gahl W.A."/>
        </authorList>
    </citation>
    <scope>PROTEIN SEQUENCE OF 2374-2394</scope>
    <scope>FUNCTION</scope>
    <scope>SUBCELLULAR LOCATION</scope>
    <scope>VARIANTS GPS PRO-388; ARG-677; LYS-1833; CYS-1839 AND TYR-2263</scope>
</reference>
<reference key="9">
    <citation type="journal article" date="2008" name="Mol. Cell">
        <title>Kinase-selective enrichment enables quantitative phosphoproteomics of the kinome across the cell cycle.</title>
        <authorList>
            <person name="Daub H."/>
            <person name="Olsen J.V."/>
            <person name="Bairlein M."/>
            <person name="Gnad F."/>
            <person name="Oppermann F.S."/>
            <person name="Korner R."/>
            <person name="Greff Z."/>
            <person name="Keri G."/>
            <person name="Stemmann O."/>
            <person name="Mann M."/>
        </authorList>
    </citation>
    <scope>PHOSPHORYLATION [LARGE SCALE ANALYSIS] AT SER-1647</scope>
    <scope>IDENTIFICATION BY MASS SPECTROMETRY [LARGE SCALE ANALYSIS]</scope>
    <source>
        <tissue>Cervix carcinoma</tissue>
    </source>
</reference>
<reference key="10">
    <citation type="journal article" date="2008" name="Proc. Natl. Acad. Sci. U.S.A.">
        <title>A quantitative atlas of mitotic phosphorylation.</title>
        <authorList>
            <person name="Dephoure N."/>
            <person name="Zhou C."/>
            <person name="Villen J."/>
            <person name="Beausoleil S.A."/>
            <person name="Bakalarski C.E."/>
            <person name="Elledge S.J."/>
            <person name="Gygi S.P."/>
        </authorList>
    </citation>
    <scope>PHOSPHORYLATION [LARGE SCALE ANALYSIS] AT SER-1647 AND SER-2739</scope>
    <scope>IDENTIFICATION BY MASS SPECTROMETRY [LARGE SCALE ANALYSIS]</scope>
    <source>
        <tissue>Cervix carcinoma</tissue>
    </source>
</reference>
<reference key="11">
    <citation type="journal article" date="2009" name="Mol. Cell. Proteomics">
        <title>Large-scale proteomics analysis of the human kinome.</title>
        <authorList>
            <person name="Oppermann F.S."/>
            <person name="Gnad F."/>
            <person name="Olsen J.V."/>
            <person name="Hornberger R."/>
            <person name="Greff Z."/>
            <person name="Keri G."/>
            <person name="Mann M."/>
            <person name="Daub H."/>
        </authorList>
    </citation>
    <scope>IDENTIFICATION BY MASS SPECTROMETRY [LARGE SCALE ANALYSIS]</scope>
</reference>
<reference key="12">
    <citation type="journal article" date="2009" name="Sci. Signal.">
        <title>Quantitative phosphoproteomic analysis of T cell receptor signaling reveals system-wide modulation of protein-protein interactions.</title>
        <authorList>
            <person name="Mayya V."/>
            <person name="Lundgren D.H."/>
            <person name="Hwang S.-I."/>
            <person name="Rezaul K."/>
            <person name="Wu L."/>
            <person name="Eng J.K."/>
            <person name="Rodionov V."/>
            <person name="Han D.K."/>
        </authorList>
    </citation>
    <scope>PHOSPHORYLATION [LARGE SCALE ANALYSIS] AT THR-1867 AND SER-2739</scope>
    <scope>IDENTIFICATION BY MASS SPECTROMETRY [LARGE SCALE ANALYSIS]</scope>
    <source>
        <tissue>Leukemic T-cell</tissue>
    </source>
</reference>
<reference key="13">
    <citation type="journal article" date="2011" name="Nat. Genet.">
        <title>Exome sequencing identifies NBEAL2 as the causative gene for gray platelet syndrome.</title>
        <authorList>
            <person name="Albers C.A."/>
            <person name="Cvejic A."/>
            <person name="Favier R."/>
            <person name="Bouwmans E.E."/>
            <person name="Alessi M.C."/>
            <person name="Bertone P."/>
            <person name="Jordan G."/>
            <person name="Kettleborough R.N."/>
            <person name="Kiddle G."/>
            <person name="Kostadima M."/>
            <person name="Read R.J."/>
            <person name="Sipos B."/>
            <person name="Sivapalaratnam S."/>
            <person name="Smethurst P.A."/>
            <person name="Stephens J."/>
            <person name="Voss K."/>
            <person name="Nurden A."/>
            <person name="Rendon A."/>
            <person name="Nurden P."/>
            <person name="Ouwehand W.H."/>
        </authorList>
    </citation>
    <scope>FUNCTION</scope>
    <scope>TISSUE SPECIFICITY</scope>
    <scope>VARIANTS GPS PRO-388; VAL-643; LEU-2100 AND LEU-2269</scope>
    <scope>VARIANTS VAL-86; PHE-682 AND GLU-2553</scope>
</reference>
<reference key="14">
    <citation type="journal article" date="2011" name="Nat. Genet.">
        <title>Mutations in NBEAL2, encoding a BEACH protein, cause gray platelet syndrome.</title>
        <authorList>
            <person name="Kahr W.H."/>
            <person name="Hinckley J."/>
            <person name="Li L."/>
            <person name="Schwertz H."/>
            <person name="Christensen H."/>
            <person name="Rowley J.W."/>
            <person name="Pluthero F.G."/>
            <person name="Urban D."/>
            <person name="Fabbro S."/>
            <person name="Nixon B."/>
            <person name="Gadzinski R."/>
            <person name="Storck M."/>
            <person name="Wang K."/>
            <person name="Ryu G.Y."/>
            <person name="Jobe S.M."/>
            <person name="Schutte B.C."/>
            <person name="Moseley J."/>
            <person name="Loughran N.B."/>
            <person name="Parkinson J."/>
            <person name="Weyrich A.S."/>
            <person name="Di Paola J."/>
        </authorList>
    </citation>
    <scope>INVOLVEMENT IN GPS</scope>
</reference>
<reference key="15">
    <citation type="journal article" date="2013" name="J. Proteome Res.">
        <title>Toward a comprehensive characterization of a human cancer cell phosphoproteome.</title>
        <authorList>
            <person name="Zhou H."/>
            <person name="Di Palma S."/>
            <person name="Preisinger C."/>
            <person name="Peng M."/>
            <person name="Polat A.N."/>
            <person name="Heck A.J."/>
            <person name="Mohammed S."/>
        </authorList>
    </citation>
    <scope>PHOSPHORYLATION [LARGE SCALE ANALYSIS] AT SER-2739 AND SER-2742</scope>
    <scope>IDENTIFICATION BY MASS SPECTROMETRY [LARGE SCALE ANALYSIS]</scope>
    <source>
        <tissue>Cervix carcinoma</tissue>
        <tissue>Erythroleukemia</tissue>
    </source>
</reference>
<gene>
    <name type="primary">NBEAL2</name>
    <name type="synonym">KIAA0540</name>
    <name type="ORF">UNQ253/PRO290</name>
</gene>
<keyword id="KW-0025">Alternative splicing</keyword>
<keyword id="KW-0903">Direct protein sequencing</keyword>
<keyword id="KW-0256">Endoplasmic reticulum</keyword>
<keyword id="KW-0597">Phosphoprotein</keyword>
<keyword id="KW-1267">Proteomics identification</keyword>
<keyword id="KW-1185">Reference proteome</keyword>
<keyword id="KW-0677">Repeat</keyword>
<keyword id="KW-0853">WD repeat</keyword>
<protein>
    <recommendedName>
        <fullName>Neurobeachin-like protein 2</fullName>
    </recommendedName>
</protein>
<dbReference type="EMBL" id="AK131104">
    <property type="protein sequence ID" value="BAC85154.1"/>
    <property type="status" value="ALT_INIT"/>
    <property type="molecule type" value="mRNA"/>
</dbReference>
<dbReference type="EMBL" id="AC094020">
    <property type="status" value="NOT_ANNOTATED_CDS"/>
    <property type="molecule type" value="Genomic_DNA"/>
</dbReference>
<dbReference type="EMBL" id="AK092871">
    <property type="protein sequence ID" value="BAC03994.1"/>
    <property type="status" value="ALT_SEQ"/>
    <property type="molecule type" value="mRNA"/>
</dbReference>
<dbReference type="EMBL" id="AB011112">
    <property type="protein sequence ID" value="BAA25466.3"/>
    <property type="molecule type" value="mRNA"/>
</dbReference>
<dbReference type="EMBL" id="AY358455">
    <property type="protein sequence ID" value="AAQ88820.1"/>
    <property type="molecule type" value="mRNA"/>
</dbReference>
<dbReference type="EMBL" id="BC060874">
    <property type="protein sequence ID" value="AAH60874.2"/>
    <property type="molecule type" value="mRNA"/>
</dbReference>
<dbReference type="CCDS" id="CCDS46817.1">
    <molecule id="Q6ZNJ1-1"/>
</dbReference>
<dbReference type="PIR" id="T00271">
    <property type="entry name" value="T00271"/>
</dbReference>
<dbReference type="RefSeq" id="NP_055990.1">
    <molecule id="Q6ZNJ1-1"/>
    <property type="nucleotide sequence ID" value="NM_015175.3"/>
</dbReference>
<dbReference type="RefSeq" id="XP_011531835.1">
    <molecule id="Q6ZNJ1-3"/>
    <property type="nucleotide sequence ID" value="XM_011533533.3"/>
</dbReference>
<dbReference type="SMR" id="Q6ZNJ1"/>
<dbReference type="BioGRID" id="116825">
    <property type="interactions" value="32"/>
</dbReference>
<dbReference type="FunCoup" id="Q6ZNJ1">
    <property type="interactions" value="1313"/>
</dbReference>
<dbReference type="IntAct" id="Q6ZNJ1">
    <property type="interactions" value="145"/>
</dbReference>
<dbReference type="STRING" id="9606.ENSP00000415034"/>
<dbReference type="GlyGen" id="Q6ZNJ1">
    <property type="glycosylation" value="7 sites, 1 O-linked glycan (5 sites)"/>
</dbReference>
<dbReference type="iPTMnet" id="Q6ZNJ1"/>
<dbReference type="PhosphoSitePlus" id="Q6ZNJ1"/>
<dbReference type="SwissPalm" id="Q6ZNJ1"/>
<dbReference type="BioMuta" id="NBEAL2"/>
<dbReference type="DMDM" id="189030821"/>
<dbReference type="CPTAC" id="CPTAC-1031"/>
<dbReference type="jPOST" id="Q6ZNJ1"/>
<dbReference type="MassIVE" id="Q6ZNJ1"/>
<dbReference type="PaxDb" id="9606-ENSP00000415034"/>
<dbReference type="PeptideAtlas" id="Q6ZNJ1"/>
<dbReference type="ProteomicsDB" id="68028">
    <molecule id="Q6ZNJ1-1"/>
</dbReference>
<dbReference type="ProteomicsDB" id="68029">
    <molecule id="Q6ZNJ1-2"/>
</dbReference>
<dbReference type="ProteomicsDB" id="68030">
    <molecule id="Q6ZNJ1-3"/>
</dbReference>
<dbReference type="Pumba" id="Q6ZNJ1"/>
<dbReference type="Antibodypedia" id="62670">
    <property type="antibodies" value="36 antibodies from 12 providers"/>
</dbReference>
<dbReference type="DNASU" id="23218"/>
<dbReference type="Ensembl" id="ENST00000450053.8">
    <molecule id="Q6ZNJ1-1"/>
    <property type="protein sequence ID" value="ENSP00000415034.2"/>
    <property type="gene ID" value="ENSG00000160796.18"/>
</dbReference>
<dbReference type="GeneID" id="23218"/>
<dbReference type="KEGG" id="hsa:23218"/>
<dbReference type="MANE-Select" id="ENST00000450053.8">
    <property type="protein sequence ID" value="ENSP00000415034.2"/>
    <property type="RefSeq nucleotide sequence ID" value="NM_015175.3"/>
    <property type="RefSeq protein sequence ID" value="NP_055990.1"/>
</dbReference>
<dbReference type="UCSC" id="uc003cqp.4">
    <molecule id="Q6ZNJ1-1"/>
    <property type="organism name" value="human"/>
</dbReference>
<dbReference type="AGR" id="HGNC:31928"/>
<dbReference type="CTD" id="23218"/>
<dbReference type="DisGeNET" id="23218"/>
<dbReference type="GeneCards" id="NBEAL2"/>
<dbReference type="HGNC" id="HGNC:31928">
    <property type="gene designation" value="NBEAL2"/>
</dbReference>
<dbReference type="HPA" id="ENSG00000160796">
    <property type="expression patterns" value="Low tissue specificity"/>
</dbReference>
<dbReference type="MalaCards" id="NBEAL2"/>
<dbReference type="MIM" id="139090">
    <property type="type" value="phenotype"/>
</dbReference>
<dbReference type="MIM" id="614169">
    <property type="type" value="gene"/>
</dbReference>
<dbReference type="neXtProt" id="NX_Q6ZNJ1"/>
<dbReference type="OpenTargets" id="ENSG00000160796"/>
<dbReference type="Orphanet" id="721">
    <property type="disease" value="Gray platelet syndrome"/>
</dbReference>
<dbReference type="PharmGKB" id="PA128394612"/>
<dbReference type="VEuPathDB" id="HostDB:ENSG00000160796"/>
<dbReference type="eggNOG" id="KOG1787">
    <property type="taxonomic scope" value="Eukaryota"/>
</dbReference>
<dbReference type="GeneTree" id="ENSGT00940000158454"/>
<dbReference type="InParanoid" id="Q6ZNJ1"/>
<dbReference type="OMA" id="SQVCEMA"/>
<dbReference type="OrthoDB" id="26681at2759"/>
<dbReference type="PAN-GO" id="Q6ZNJ1">
    <property type="GO annotations" value="4 GO annotations based on evolutionary models"/>
</dbReference>
<dbReference type="PhylomeDB" id="Q6ZNJ1"/>
<dbReference type="TreeFam" id="TF323165"/>
<dbReference type="PathwayCommons" id="Q6ZNJ1"/>
<dbReference type="Reactome" id="R-HSA-6798695">
    <property type="pathway name" value="Neutrophil degranulation"/>
</dbReference>
<dbReference type="SignaLink" id="Q6ZNJ1"/>
<dbReference type="SIGNOR" id="Q6ZNJ1"/>
<dbReference type="BioGRID-ORCS" id="23218">
    <property type="hits" value="12 hits in 1161 CRISPR screens"/>
</dbReference>
<dbReference type="ChiTaRS" id="NBEAL2">
    <property type="organism name" value="human"/>
</dbReference>
<dbReference type="GeneWiki" id="NBEAL2"/>
<dbReference type="GenomeRNAi" id="23218"/>
<dbReference type="Pharos" id="Q6ZNJ1">
    <property type="development level" value="Tbio"/>
</dbReference>
<dbReference type="PRO" id="PR:Q6ZNJ1"/>
<dbReference type="Proteomes" id="UP000005640">
    <property type="component" value="Chromosome 3"/>
</dbReference>
<dbReference type="RNAct" id="Q6ZNJ1">
    <property type="molecule type" value="protein"/>
</dbReference>
<dbReference type="Bgee" id="ENSG00000160796">
    <property type="expression patterns" value="Expressed in granulocyte and 142 other cell types or tissues"/>
</dbReference>
<dbReference type="ExpressionAtlas" id="Q6ZNJ1">
    <property type="expression patterns" value="baseline and differential"/>
</dbReference>
<dbReference type="GO" id="GO:0005829">
    <property type="term" value="C:cytosol"/>
    <property type="evidence" value="ECO:0000318"/>
    <property type="project" value="GO_Central"/>
</dbReference>
<dbReference type="GO" id="GO:0005783">
    <property type="term" value="C:endoplasmic reticulum"/>
    <property type="evidence" value="ECO:0000314"/>
    <property type="project" value="UniProtKB"/>
</dbReference>
<dbReference type="GO" id="GO:0101003">
    <property type="term" value="C:ficolin-1-rich granule membrane"/>
    <property type="evidence" value="ECO:0000304"/>
    <property type="project" value="Reactome"/>
</dbReference>
<dbReference type="GO" id="GO:0016020">
    <property type="term" value="C:membrane"/>
    <property type="evidence" value="ECO:0007005"/>
    <property type="project" value="UniProtKB"/>
</dbReference>
<dbReference type="GO" id="GO:0005886">
    <property type="term" value="C:plasma membrane"/>
    <property type="evidence" value="ECO:0000304"/>
    <property type="project" value="Reactome"/>
</dbReference>
<dbReference type="GO" id="GO:0070821">
    <property type="term" value="C:tertiary granule membrane"/>
    <property type="evidence" value="ECO:0000304"/>
    <property type="project" value="Reactome"/>
</dbReference>
<dbReference type="GO" id="GO:0019901">
    <property type="term" value="F:protein kinase binding"/>
    <property type="evidence" value="ECO:0000318"/>
    <property type="project" value="GO_Central"/>
</dbReference>
<dbReference type="GO" id="GO:0030220">
    <property type="term" value="P:platelet formation"/>
    <property type="evidence" value="ECO:0000315"/>
    <property type="project" value="UniProtKB"/>
</dbReference>
<dbReference type="GO" id="GO:0008104">
    <property type="term" value="P:protein localization"/>
    <property type="evidence" value="ECO:0000318"/>
    <property type="project" value="GO_Central"/>
</dbReference>
<dbReference type="CDD" id="cd06071">
    <property type="entry name" value="Beach"/>
    <property type="match status" value="1"/>
</dbReference>
<dbReference type="CDD" id="cd01201">
    <property type="entry name" value="PH_BEACH"/>
    <property type="match status" value="1"/>
</dbReference>
<dbReference type="FunFam" id="1.10.1540.10:FF:000001">
    <property type="entry name" value="neurobeachin isoform X1"/>
    <property type="match status" value="1"/>
</dbReference>
<dbReference type="FunFam" id="2.130.10.10:FF:001375">
    <property type="entry name" value="Neurobeachin-like protein 2"/>
    <property type="match status" value="1"/>
</dbReference>
<dbReference type="Gene3D" id="1.10.1540.10">
    <property type="entry name" value="BEACH domain"/>
    <property type="match status" value="1"/>
</dbReference>
<dbReference type="Gene3D" id="1.25.10.10">
    <property type="entry name" value="Leucine-rich Repeat Variant"/>
    <property type="match status" value="1"/>
</dbReference>
<dbReference type="Gene3D" id="2.30.29.30">
    <property type="entry name" value="Pleckstrin-homology domain (PH domain)/Phosphotyrosine-binding domain (PTB)"/>
    <property type="match status" value="1"/>
</dbReference>
<dbReference type="Gene3D" id="2.130.10.10">
    <property type="entry name" value="YVTN repeat-like/Quinoprotein amine dehydrogenase"/>
    <property type="match status" value="1"/>
</dbReference>
<dbReference type="InterPro" id="IPR011989">
    <property type="entry name" value="ARM-like"/>
</dbReference>
<dbReference type="InterPro" id="IPR016024">
    <property type="entry name" value="ARM-type_fold"/>
</dbReference>
<dbReference type="InterPro" id="IPR000409">
    <property type="entry name" value="BEACH_dom"/>
</dbReference>
<dbReference type="InterPro" id="IPR036372">
    <property type="entry name" value="BEACH_dom_sf"/>
</dbReference>
<dbReference type="InterPro" id="IPR050865">
    <property type="entry name" value="BEACH_Domain"/>
</dbReference>
<dbReference type="InterPro" id="IPR013320">
    <property type="entry name" value="ConA-like_dom_sf"/>
</dbReference>
<dbReference type="InterPro" id="IPR046851">
    <property type="entry name" value="NBCH_WD40"/>
</dbReference>
<dbReference type="InterPro" id="IPR031570">
    <property type="entry name" value="NBEA/BDCP_DUF4704"/>
</dbReference>
<dbReference type="InterPro" id="IPR046852">
    <property type="entry name" value="Neurobeachin_a-sol"/>
</dbReference>
<dbReference type="InterPro" id="IPR023362">
    <property type="entry name" value="PH-BEACH_dom"/>
</dbReference>
<dbReference type="InterPro" id="IPR011993">
    <property type="entry name" value="PH-like_dom_sf"/>
</dbReference>
<dbReference type="InterPro" id="IPR015943">
    <property type="entry name" value="WD40/YVTN_repeat-like_dom_sf"/>
</dbReference>
<dbReference type="InterPro" id="IPR036322">
    <property type="entry name" value="WD40_repeat_dom_sf"/>
</dbReference>
<dbReference type="InterPro" id="IPR001680">
    <property type="entry name" value="WD40_rpt"/>
</dbReference>
<dbReference type="PANTHER" id="PTHR13743">
    <property type="entry name" value="BEIGE/BEACH-RELATED"/>
    <property type="match status" value="1"/>
</dbReference>
<dbReference type="PANTHER" id="PTHR13743:SF111">
    <property type="entry name" value="NEUROBEACHIN-LIKE PROTEIN 2"/>
    <property type="match status" value="1"/>
</dbReference>
<dbReference type="Pfam" id="PF02138">
    <property type="entry name" value="Beach"/>
    <property type="match status" value="1"/>
</dbReference>
<dbReference type="Pfam" id="PF15787">
    <property type="entry name" value="DUF4704"/>
    <property type="match status" value="1"/>
</dbReference>
<dbReference type="Pfam" id="PF16057">
    <property type="entry name" value="DUF4800"/>
    <property type="match status" value="1"/>
</dbReference>
<dbReference type="Pfam" id="PF20426">
    <property type="entry name" value="NBCH_WD40"/>
    <property type="match status" value="1"/>
</dbReference>
<dbReference type="Pfam" id="PF20425">
    <property type="entry name" value="Neurobeachin"/>
    <property type="match status" value="1"/>
</dbReference>
<dbReference type="Pfam" id="PF14844">
    <property type="entry name" value="PH_BEACH"/>
    <property type="match status" value="1"/>
</dbReference>
<dbReference type="SMART" id="SM01026">
    <property type="entry name" value="Beach"/>
    <property type="match status" value="1"/>
</dbReference>
<dbReference type="SMART" id="SM00320">
    <property type="entry name" value="WD40"/>
    <property type="match status" value="3"/>
</dbReference>
<dbReference type="SUPFAM" id="SSF48371">
    <property type="entry name" value="ARM repeat"/>
    <property type="match status" value="1"/>
</dbReference>
<dbReference type="SUPFAM" id="SSF81837">
    <property type="entry name" value="BEACH domain"/>
    <property type="match status" value="1"/>
</dbReference>
<dbReference type="SUPFAM" id="SSF49899">
    <property type="entry name" value="Concanavalin A-like lectins/glucanases"/>
    <property type="match status" value="1"/>
</dbReference>
<dbReference type="SUPFAM" id="SSF50729">
    <property type="entry name" value="PH domain-like"/>
    <property type="match status" value="1"/>
</dbReference>
<dbReference type="SUPFAM" id="SSF50978">
    <property type="entry name" value="WD40 repeat-like"/>
    <property type="match status" value="1"/>
</dbReference>
<dbReference type="PROSITE" id="PS50197">
    <property type="entry name" value="BEACH"/>
    <property type="match status" value="1"/>
</dbReference>
<dbReference type="PROSITE" id="PS51783">
    <property type="entry name" value="PH_BEACH"/>
    <property type="match status" value="1"/>
</dbReference>
<dbReference type="PROSITE" id="PS50082">
    <property type="entry name" value="WD_REPEATS_2"/>
    <property type="match status" value="2"/>
</dbReference>
<dbReference type="PROSITE" id="PS50294">
    <property type="entry name" value="WD_REPEATS_REGION"/>
    <property type="match status" value="1"/>
</dbReference>
<evidence type="ECO:0000255" key="1">
    <source>
        <dbReference type="PROSITE-ProRule" id="PRU00026"/>
    </source>
</evidence>
<evidence type="ECO:0000255" key="2">
    <source>
        <dbReference type="PROSITE-ProRule" id="PRU01119"/>
    </source>
</evidence>
<evidence type="ECO:0000256" key="3">
    <source>
        <dbReference type="SAM" id="MobiDB-lite"/>
    </source>
</evidence>
<evidence type="ECO:0000269" key="4">
    <source>
    </source>
</evidence>
<evidence type="ECO:0000269" key="5">
    <source>
    </source>
</evidence>
<evidence type="ECO:0000269" key="6">
    <source>
    </source>
</evidence>
<evidence type="ECO:0000303" key="7">
    <source>
    </source>
</evidence>
<evidence type="ECO:0000303" key="8">
    <source>
    </source>
</evidence>
<evidence type="ECO:0000305" key="9"/>
<evidence type="ECO:0007744" key="10">
    <source>
    </source>
</evidence>
<evidence type="ECO:0007744" key="11">
    <source>
    </source>
</evidence>
<evidence type="ECO:0007744" key="12">
    <source>
    </source>
</evidence>
<evidence type="ECO:0007744" key="13">
    <source>
    </source>
</evidence>
<accession>Q6ZNJ1</accession>
<accession>O60288</accession>
<accession>Q6P994</accession>
<accession>Q6UX91</accession>
<accession>Q8NAC9</accession>
<name>NBEL2_HUMAN</name>
<feature type="chain" id="PRO_0000333254" description="Neurobeachin-like protein 2">
    <location>
        <begin position="1"/>
        <end position="2754"/>
    </location>
</feature>
<feature type="domain" description="BEACH-type PH" evidence="2">
    <location>
        <begin position="1915"/>
        <end position="2040"/>
    </location>
</feature>
<feature type="domain" description="BEACH" evidence="1">
    <location>
        <begin position="2053"/>
        <end position="2345"/>
    </location>
</feature>
<feature type="repeat" description="WD 1">
    <location>
        <begin position="2386"/>
        <end position="2424"/>
    </location>
</feature>
<feature type="repeat" description="WD 2">
    <location>
        <begin position="2448"/>
        <end position="2491"/>
    </location>
</feature>
<feature type="repeat" description="WD 3">
    <location>
        <begin position="2494"/>
        <end position="2531"/>
    </location>
</feature>
<feature type="repeat" description="WD 4">
    <location>
        <begin position="2544"/>
        <end position="2582"/>
    </location>
</feature>
<feature type="repeat" description="WD 5">
    <location>
        <begin position="2589"/>
        <end position="2631"/>
    </location>
</feature>
<feature type="repeat" description="WD 6">
    <location>
        <begin position="2639"/>
        <end position="2674"/>
    </location>
</feature>
<feature type="repeat" description="WD 7">
    <location>
        <begin position="2682"/>
        <end position="2717"/>
    </location>
</feature>
<feature type="region of interest" description="Disordered" evidence="3">
    <location>
        <begin position="1298"/>
        <end position="1338"/>
    </location>
</feature>
<feature type="region of interest" description="Disordered" evidence="3">
    <location>
        <begin position="1364"/>
        <end position="1438"/>
    </location>
</feature>
<feature type="compositionally biased region" description="Pro residues" evidence="3">
    <location>
        <begin position="1301"/>
        <end position="1323"/>
    </location>
</feature>
<feature type="compositionally biased region" description="Pro residues" evidence="3">
    <location>
        <begin position="1388"/>
        <end position="1400"/>
    </location>
</feature>
<feature type="compositionally biased region" description="Polar residues" evidence="3">
    <location>
        <begin position="1425"/>
        <end position="1437"/>
    </location>
</feature>
<feature type="modified residue" description="Phosphoserine" evidence="10 11">
    <location>
        <position position="1647"/>
    </location>
</feature>
<feature type="modified residue" description="Phosphothreonine" evidence="12">
    <location>
        <position position="1867"/>
    </location>
</feature>
<feature type="modified residue" description="Phosphoserine" evidence="10 12 13">
    <location>
        <position position="2739"/>
    </location>
</feature>
<feature type="modified residue" description="Phosphoserine" evidence="13">
    <location>
        <position position="2742"/>
    </location>
</feature>
<feature type="splice variant" id="VSP_033505" description="In isoform 2." evidence="8">
    <location>
        <begin position="1129"/>
        <end position="1181"/>
    </location>
</feature>
<feature type="splice variant" id="VSP_033506" description="In isoform 2." evidence="8">
    <location>
        <begin position="1235"/>
        <end position="1365"/>
    </location>
</feature>
<feature type="splice variant" id="VSP_033507" description="In isoform 3." evidence="7">
    <location>
        <begin position="2379"/>
        <end position="2408"/>
    </location>
</feature>
<feature type="sequence variant" id="VAR_066975" description="In a patient with gray platelet syndrome; dbSNP:rs754407148." evidence="4">
    <original>I</original>
    <variation>V</variation>
    <location>
        <position position="86"/>
    </location>
</feature>
<feature type="sequence variant" id="VAR_066976" description="In GPS; dbSNP:rs387907113." evidence="4 5">
    <original>L</original>
    <variation>P</variation>
    <location>
        <position position="388"/>
    </location>
</feature>
<feature type="sequence variant" id="VAR_043133" description="In dbSNP:rs17079425.">
    <original>R</original>
    <variation>H</variation>
    <location>
        <position position="447"/>
    </location>
</feature>
<feature type="sequence variant" id="VAR_043134" description="In dbSNP:rs11720139.">
    <original>R</original>
    <variation>G</variation>
    <location>
        <position position="511"/>
    </location>
</feature>
<feature type="sequence variant" id="VAR_066977" description="In GPS; dbSNP:rs387907114." evidence="4">
    <original>E</original>
    <variation>V</variation>
    <location>
        <position position="643"/>
    </location>
</feature>
<feature type="sequence variant" id="VAR_066978" description="In GPS." evidence="5">
    <original>W</original>
    <variation>R</variation>
    <location>
        <position position="677"/>
    </location>
</feature>
<feature type="sequence variant" id="VAR_066979" description="In a patient with gray platelet syndrome; dbSNP:rs773164015." evidence="4">
    <original>I</original>
    <variation>F</variation>
    <location>
        <position position="682"/>
    </location>
</feature>
<feature type="sequence variant" id="VAR_066980" description="In GPS; dbSNP:rs1341020147." evidence="5">
    <original>E</original>
    <variation>K</variation>
    <location>
        <position position="1833"/>
    </location>
</feature>
<feature type="sequence variant" id="VAR_066981" description="In GPS; dbSNP:rs750160418." evidence="5">
    <original>R</original>
    <variation>C</variation>
    <location>
        <position position="1839"/>
    </location>
</feature>
<feature type="sequence variant" id="VAR_043135" description="In dbSNP:rs4682830.">
    <original>A</original>
    <variation>G</variation>
    <location>
        <position position="1877"/>
    </location>
</feature>
<feature type="sequence variant" id="VAR_043136" description="In dbSNP:rs2305637.">
    <original>S</original>
    <variation>F</variation>
    <location>
        <position position="2054"/>
    </location>
</feature>
<feature type="sequence variant" id="VAR_066982" description="In GPS; dbSNP:rs387907115." evidence="4">
    <original>P</original>
    <variation>L</variation>
    <location>
        <position position="2100"/>
    </location>
</feature>
<feature type="sequence variant" id="VAR_066983" description="In GPS; dbSNP:rs1357067113." evidence="5">
    <original>H</original>
    <variation>Y</variation>
    <location>
        <position position="2263"/>
    </location>
</feature>
<feature type="sequence variant" id="VAR_066984" description="In GPS; dbSNP:rs749896920." evidence="4">
    <original>S</original>
    <variation>L</variation>
    <location>
        <position position="2269"/>
    </location>
</feature>
<feature type="sequence variant" id="VAR_066985" description="In dbSNP:rs144664865." evidence="4">
    <original>G</original>
    <variation>E</variation>
    <location>
        <position position="2553"/>
    </location>
</feature>
<feature type="sequence variant" id="VAR_043137" description="In dbSNP:rs12893.">
    <original>E</original>
    <variation>K</variation>
    <location>
        <position position="2747"/>
    </location>
</feature>
<feature type="sequence conflict" description="In Ref. 3; BAC03994." evidence="9" ref="3">
    <original>L</original>
    <variation>P</variation>
    <location>
        <position position="79"/>
    </location>
</feature>
<feature type="sequence conflict" description="In Ref. 7; AAH60874." evidence="9" ref="7">
    <original>N</original>
    <variation>K</variation>
    <location>
        <position position="1845"/>
    </location>
</feature>
<feature type="sequence conflict" description="In Ref. 7; AAH60874." evidence="9" ref="7">
    <original>S</original>
    <variation>P</variation>
    <location>
        <position position="2161"/>
    </location>
</feature>
<organism>
    <name type="scientific">Homo sapiens</name>
    <name type="common">Human</name>
    <dbReference type="NCBI Taxonomy" id="9606"/>
    <lineage>
        <taxon>Eukaryota</taxon>
        <taxon>Metazoa</taxon>
        <taxon>Chordata</taxon>
        <taxon>Craniata</taxon>
        <taxon>Vertebrata</taxon>
        <taxon>Euteleostomi</taxon>
        <taxon>Mammalia</taxon>
        <taxon>Eutheria</taxon>
        <taxon>Euarchontoglires</taxon>
        <taxon>Primates</taxon>
        <taxon>Haplorrhini</taxon>
        <taxon>Catarrhini</taxon>
        <taxon>Hominidae</taxon>
        <taxon>Homo</taxon>
    </lineage>
</organism>